<reference key="1">
    <citation type="journal article" date="2002" name="Nature">
        <title>Complete genome sequence of the model actinomycete Streptomyces coelicolor A3(2).</title>
        <authorList>
            <person name="Bentley S.D."/>
            <person name="Chater K.F."/>
            <person name="Cerdeno-Tarraga A.-M."/>
            <person name="Challis G.L."/>
            <person name="Thomson N.R."/>
            <person name="James K.D."/>
            <person name="Harris D.E."/>
            <person name="Quail M.A."/>
            <person name="Kieser H."/>
            <person name="Harper D."/>
            <person name="Bateman A."/>
            <person name="Brown S."/>
            <person name="Chandra G."/>
            <person name="Chen C.W."/>
            <person name="Collins M."/>
            <person name="Cronin A."/>
            <person name="Fraser A."/>
            <person name="Goble A."/>
            <person name="Hidalgo J."/>
            <person name="Hornsby T."/>
            <person name="Howarth S."/>
            <person name="Huang C.-H."/>
            <person name="Kieser T."/>
            <person name="Larke L."/>
            <person name="Murphy L.D."/>
            <person name="Oliver K."/>
            <person name="O'Neil S."/>
            <person name="Rabbinowitsch E."/>
            <person name="Rajandream M.A."/>
            <person name="Rutherford K.M."/>
            <person name="Rutter S."/>
            <person name="Seeger K."/>
            <person name="Saunders D."/>
            <person name="Sharp S."/>
            <person name="Squares R."/>
            <person name="Squares S."/>
            <person name="Taylor K."/>
            <person name="Warren T."/>
            <person name="Wietzorrek A."/>
            <person name="Woodward J.R."/>
            <person name="Barrell B.G."/>
            <person name="Parkhill J."/>
            <person name="Hopwood D.A."/>
        </authorList>
    </citation>
    <scope>NUCLEOTIDE SEQUENCE [LARGE SCALE GENOMIC DNA]</scope>
    <source>
        <strain>ATCC BAA-471 / A3(2) / M145</strain>
    </source>
</reference>
<reference key="2">
    <citation type="journal article" date="1999" name="Microbiology">
        <title>Nitrogen metabolism in Streptomyces coelicolor A3(2): modification of glutamine synthetase I by an adenylyltransferase.</title>
        <authorList>
            <person name="Fink D."/>
            <person name="Falke D."/>
            <person name="Wohlleben W."/>
            <person name="Engels A."/>
        </authorList>
    </citation>
    <scope>NUCLEOTIDE SEQUENCE [GENOMIC DNA] OF 1-784</scope>
    <scope>FUNCTION</scope>
    <source>
        <strain>A3</strain>
    </source>
</reference>
<proteinExistence type="inferred from homology"/>
<sequence>MTPGRRSSTFTRLLRHGFTDPSAAERLLDGAGLAELRADPVLLEALGATADPDLALHGLVRLLEAQPDATARQELLDTLIAAKPLRDRLLGVLGASEALADHLARHAGDWQTLVTYEPRDLHRGVEEFERGLAEATDPVTLRVAYRRCLLSIAARDVCGTIDVAETAAELADLAIATLRAALALAEAAAPEDAARCRLAVIAMGKCGGHELNYVSDVDVIFVGEAADTGPDADEAKAMRAATSLAAHMMRICSETTVEGSIWPVDANLRPEGRNGPLVRTLSSHVAYYQRWAKTWEFQALLKARPVAGDPGLGAEYVAALQPLVWQAADRENFVPDVQKMRRRVVENIPLTEVDRQLKLGPGGLRDVEFAVQLLQLVHGRADTSLHSGTTLDALEALAAGGYVGRTDAAQLDEAYRFLRSMEHRIQLHRLRRTHLVPEDEADLRRLGRSLGLRTDPVTGLLRAWKRHASVVRRLHEKLFYRPLLDAVAQLAPGEARLSPEAARERLVALGYADPAAALRHLEALASGVTRKAAIQRTLLPVLLGWFADSADPDTGLLNFRKVSDALGTTPWYLRLLRDEGAAAENLARVLSAGRLAPDLLMRAPEAVALLGDGVAGGLRPRDRAQLEQETLAAVRRADDAVQAVTAVRGVRRRELFRTAAADIVGSYGTETQPVEADQGALVDLVGGAVSDLTSATLAGTLRAVVREKWGDVLPTRFAIIGMGRFGGHELGYGSDADVLFVHEPRDGVAEREAGDAANKVVSEMRRLLQVPSADPPLLIDADLRPEGRSGPLVRTLKSYEAYYRRWSLGWESHALLRAEFVAGDEELGRRFIELIDPLRYPEGGLGEDAVREIRRLKARMESERLPRGADPKLHAKLGPGGLSDVEWTVQLLQLRHGHEIAGLRTTRTRTALAAARDAGLISEEHTATLDEAWVLATRVRNAVMLVRGRAGDTFPTDPRELAAVGRYLGHGSGHAGDMLDEYRRTARRARTVVEDLFYA</sequence>
<evidence type="ECO:0000255" key="1">
    <source>
        <dbReference type="HAMAP-Rule" id="MF_00802"/>
    </source>
</evidence>
<evidence type="ECO:0000269" key="2">
    <source>
    </source>
</evidence>
<evidence type="ECO:0000305" key="3"/>
<comment type="function">
    <text evidence="2">Adenylation and deadenylation of glutamate--ammonia ligase.</text>
</comment>
<comment type="function">
    <text evidence="1">Involved in the regulation of glutamine synthetase GlnA, a key enzyme in the process to assimilate ammonia. When cellular nitrogen levels are high, the C-terminal adenylyl transferase (AT) inactivates GlnA by covalent transfer of an adenylyl group from ATP to specific tyrosine residue of GlnA, thus reducing its activity. Conversely, when nitrogen levels are low, the N-terminal adenylyl removase (AR) activates GlnA by removing the adenylyl group by phosphorolysis, increasing its activity. The regulatory region of GlnE binds the signal transduction protein PII (GlnB) which indicates the nitrogen status of the cell.</text>
</comment>
<comment type="catalytic activity">
    <reaction evidence="1">
        <text>[glutamine synthetase]-O(4)-(5'-adenylyl)-L-tyrosine + phosphate = [glutamine synthetase]-L-tyrosine + ADP</text>
        <dbReference type="Rhea" id="RHEA:43716"/>
        <dbReference type="Rhea" id="RHEA-COMP:10660"/>
        <dbReference type="Rhea" id="RHEA-COMP:10661"/>
        <dbReference type="ChEBI" id="CHEBI:43474"/>
        <dbReference type="ChEBI" id="CHEBI:46858"/>
        <dbReference type="ChEBI" id="CHEBI:83624"/>
        <dbReference type="ChEBI" id="CHEBI:456216"/>
        <dbReference type="EC" id="2.7.7.89"/>
    </reaction>
</comment>
<comment type="catalytic activity">
    <reaction evidence="1">
        <text>[glutamine synthetase]-L-tyrosine + ATP = [glutamine synthetase]-O(4)-(5'-adenylyl)-L-tyrosine + diphosphate</text>
        <dbReference type="Rhea" id="RHEA:18589"/>
        <dbReference type="Rhea" id="RHEA-COMP:10660"/>
        <dbReference type="Rhea" id="RHEA-COMP:10661"/>
        <dbReference type="ChEBI" id="CHEBI:30616"/>
        <dbReference type="ChEBI" id="CHEBI:33019"/>
        <dbReference type="ChEBI" id="CHEBI:46858"/>
        <dbReference type="ChEBI" id="CHEBI:83624"/>
        <dbReference type="EC" id="2.7.7.42"/>
    </reaction>
</comment>
<comment type="cofactor">
    <cofactor evidence="1">
        <name>Mg(2+)</name>
        <dbReference type="ChEBI" id="CHEBI:18420"/>
    </cofactor>
</comment>
<comment type="similarity">
    <text evidence="1">Belongs to the GlnE family.</text>
</comment>
<accession>Q8CK02</accession>
<accession>O86858</accession>
<organism>
    <name type="scientific">Streptomyces coelicolor (strain ATCC BAA-471 / A3(2) / M145)</name>
    <dbReference type="NCBI Taxonomy" id="100226"/>
    <lineage>
        <taxon>Bacteria</taxon>
        <taxon>Bacillati</taxon>
        <taxon>Actinomycetota</taxon>
        <taxon>Actinomycetes</taxon>
        <taxon>Kitasatosporales</taxon>
        <taxon>Streptomycetaceae</taxon>
        <taxon>Streptomyces</taxon>
        <taxon>Streptomyces albidoflavus group</taxon>
    </lineage>
</organism>
<gene>
    <name evidence="1" type="primary">glnE</name>
    <name type="ordered locus">SCO2234</name>
    <name type="ORF">SC10B7.29c</name>
    <name type="ORF">SCBAC17D6.01c</name>
</gene>
<keyword id="KW-0067">ATP-binding</keyword>
<keyword id="KW-0460">Magnesium</keyword>
<keyword id="KW-0511">Multifunctional enzyme</keyword>
<keyword id="KW-0547">Nucleotide-binding</keyword>
<keyword id="KW-0548">Nucleotidyltransferase</keyword>
<keyword id="KW-1185">Reference proteome</keyword>
<keyword id="KW-0808">Transferase</keyword>
<name>GLNE_STRCO</name>
<protein>
    <recommendedName>
        <fullName evidence="1">Bifunctional glutamine synthetase adenylyltransferase/adenylyl-removing enzyme</fullName>
    </recommendedName>
    <alternativeName>
        <fullName evidence="1">ATP:glutamine synthetase adenylyltransferase</fullName>
    </alternativeName>
    <alternativeName>
        <fullName evidence="1">ATase</fullName>
    </alternativeName>
    <domain>
        <recommendedName>
            <fullName evidence="1">Glutamine synthetase adenylyl-L-tyrosine phosphorylase</fullName>
            <ecNumber evidence="1">2.7.7.89</ecNumber>
        </recommendedName>
        <alternativeName>
            <fullName evidence="1">Adenylyl removase</fullName>
            <shortName evidence="1">AR</shortName>
            <shortName evidence="1">AT-N</shortName>
        </alternativeName>
    </domain>
    <domain>
        <recommendedName>
            <fullName evidence="1">Glutamine synthetase adenylyl transferase</fullName>
            <ecNumber evidence="1">2.7.7.42</ecNumber>
        </recommendedName>
        <alternativeName>
            <fullName evidence="1">Adenylyl transferase</fullName>
            <shortName evidence="1">AT</shortName>
            <shortName evidence="1">AT-C</shortName>
        </alternativeName>
    </domain>
</protein>
<feature type="chain" id="PRO_0000209280" description="Bifunctional glutamine synthetase adenylyltransferase/adenylyl-removing enzyme">
    <location>
        <begin position="1"/>
        <end position="999"/>
    </location>
</feature>
<feature type="region of interest" description="Adenylyl removase" evidence="1">
    <location>
        <begin position="1"/>
        <end position="483"/>
    </location>
</feature>
<feature type="region of interest" description="Adenylyl transferase" evidence="1">
    <location>
        <begin position="489"/>
        <end position="999"/>
    </location>
</feature>
<feature type="sequence conflict" description="In Ref. 2; CAA76840." evidence="3" ref="2">
    <original>CGTIDV</original>
    <variation>RHHRL</variation>
    <location>
        <begin position="158"/>
        <end position="163"/>
    </location>
</feature>
<feature type="sequence conflict" description="In Ref. 2; CAA76840." evidence="3" ref="2">
    <original>R</original>
    <variation>AA</variation>
    <location>
        <position position="431"/>
    </location>
</feature>
<feature type="sequence conflict" description="In Ref. 2; CAA76840." evidence="3" ref="2">
    <original>L</original>
    <variation>P</variation>
    <location>
        <position position="509"/>
    </location>
</feature>
<feature type="sequence conflict" description="In Ref. 2; CAA76840." evidence="3" ref="2">
    <original>D</original>
    <variation>N</variation>
    <location>
        <position position="782"/>
    </location>
</feature>
<dbReference type="EC" id="2.7.7.89" evidence="1"/>
<dbReference type="EC" id="2.7.7.42" evidence="1"/>
<dbReference type="EMBL" id="AL939111">
    <property type="protein sequence ID" value="CAD55299.1"/>
    <property type="molecule type" value="Genomic_DNA"/>
</dbReference>
<dbReference type="EMBL" id="Y17736">
    <property type="protein sequence ID" value="CAA76840.2"/>
    <property type="molecule type" value="Genomic_DNA"/>
</dbReference>
<dbReference type="PIR" id="T51759">
    <property type="entry name" value="T51759"/>
</dbReference>
<dbReference type="RefSeq" id="NP_733564.1">
    <property type="nucleotide sequence ID" value="NC_003888.3"/>
</dbReference>
<dbReference type="RefSeq" id="WP_011028215.1">
    <property type="nucleotide sequence ID" value="NZ_VNID01000001.1"/>
</dbReference>
<dbReference type="SMR" id="Q8CK02"/>
<dbReference type="FunCoup" id="Q8CK02">
    <property type="interactions" value="4"/>
</dbReference>
<dbReference type="STRING" id="100226.gene:17759831"/>
<dbReference type="PaxDb" id="100226-SCO2234"/>
<dbReference type="KEGG" id="sco:SCO2234"/>
<dbReference type="PATRIC" id="fig|100226.15.peg.2271"/>
<dbReference type="eggNOG" id="COG1391">
    <property type="taxonomic scope" value="Bacteria"/>
</dbReference>
<dbReference type="HOGENOM" id="CLU_006233_1_0_11"/>
<dbReference type="InParanoid" id="Q8CK02"/>
<dbReference type="OrthoDB" id="9759366at2"/>
<dbReference type="PhylomeDB" id="Q8CK02"/>
<dbReference type="BRENDA" id="2.7.7.42">
    <property type="organism ID" value="5998"/>
</dbReference>
<dbReference type="BRENDA" id="2.7.7.89">
    <property type="organism ID" value="5998"/>
</dbReference>
<dbReference type="Proteomes" id="UP000001973">
    <property type="component" value="Chromosome"/>
</dbReference>
<dbReference type="GO" id="GO:0005829">
    <property type="term" value="C:cytosol"/>
    <property type="evidence" value="ECO:0000318"/>
    <property type="project" value="GO_Central"/>
</dbReference>
<dbReference type="GO" id="GO:0008882">
    <property type="term" value="F:[glutamate-ammonia-ligase] adenylyltransferase activity"/>
    <property type="evidence" value="ECO:0000318"/>
    <property type="project" value="GO_Central"/>
</dbReference>
<dbReference type="GO" id="GO:0047388">
    <property type="term" value="F:[glutamine synthetase]-adenylyl-L-tyrosine phosphorylase activity"/>
    <property type="evidence" value="ECO:0007669"/>
    <property type="project" value="UniProtKB-EC"/>
</dbReference>
<dbReference type="GO" id="GO:0005524">
    <property type="term" value="F:ATP binding"/>
    <property type="evidence" value="ECO:0007669"/>
    <property type="project" value="UniProtKB-UniRule"/>
</dbReference>
<dbReference type="GO" id="GO:0000287">
    <property type="term" value="F:magnesium ion binding"/>
    <property type="evidence" value="ECO:0007669"/>
    <property type="project" value="UniProtKB-UniRule"/>
</dbReference>
<dbReference type="GO" id="GO:0000820">
    <property type="term" value="P:regulation of glutamine family amino acid metabolic process"/>
    <property type="evidence" value="ECO:0000318"/>
    <property type="project" value="GO_Central"/>
</dbReference>
<dbReference type="CDD" id="cd05401">
    <property type="entry name" value="NT_GlnE_GlnD_like"/>
    <property type="match status" value="2"/>
</dbReference>
<dbReference type="FunFam" id="1.20.120.1510:FF:000003">
    <property type="entry name" value="Bifunctional glutamine synthetase adenylyltransferase/adenylyl-removing enzyme"/>
    <property type="match status" value="1"/>
</dbReference>
<dbReference type="FunFam" id="3.30.460.10:FF:000055">
    <property type="entry name" value="Bifunctional glutamine synthetase adenylyltransferase/adenylyl-removing enzyme"/>
    <property type="match status" value="1"/>
</dbReference>
<dbReference type="Gene3D" id="1.20.120.1510">
    <property type="match status" value="1"/>
</dbReference>
<dbReference type="Gene3D" id="3.30.460.10">
    <property type="entry name" value="Beta Polymerase, domain 2"/>
    <property type="match status" value="2"/>
</dbReference>
<dbReference type="Gene3D" id="1.20.120.330">
    <property type="entry name" value="Nucleotidyltransferases domain 2"/>
    <property type="match status" value="2"/>
</dbReference>
<dbReference type="HAMAP" id="MF_00802">
    <property type="entry name" value="GlnE"/>
    <property type="match status" value="1"/>
</dbReference>
<dbReference type="InterPro" id="IPR023057">
    <property type="entry name" value="GlnE"/>
</dbReference>
<dbReference type="InterPro" id="IPR005190">
    <property type="entry name" value="GlnE_rpt_dom"/>
</dbReference>
<dbReference type="InterPro" id="IPR043519">
    <property type="entry name" value="NT_sf"/>
</dbReference>
<dbReference type="InterPro" id="IPR013546">
    <property type="entry name" value="PII_UdlTrfase/GS_AdlTrfase"/>
</dbReference>
<dbReference type="NCBIfam" id="NF010707">
    <property type="entry name" value="PRK14109.1"/>
    <property type="match status" value="1"/>
</dbReference>
<dbReference type="PANTHER" id="PTHR30621:SF0">
    <property type="entry name" value="BIFUNCTIONAL GLUTAMINE SYNTHETASE ADENYLYLTRANSFERASE_ADENYLYL-REMOVING ENZYME"/>
    <property type="match status" value="1"/>
</dbReference>
<dbReference type="PANTHER" id="PTHR30621">
    <property type="entry name" value="GLUTAMINE SYNTHETASE ADENYLYLTRANSFERASE"/>
    <property type="match status" value="1"/>
</dbReference>
<dbReference type="Pfam" id="PF08335">
    <property type="entry name" value="GlnD_UR_UTase"/>
    <property type="match status" value="2"/>
</dbReference>
<dbReference type="Pfam" id="PF03710">
    <property type="entry name" value="GlnE"/>
    <property type="match status" value="2"/>
</dbReference>
<dbReference type="SUPFAM" id="SSF81301">
    <property type="entry name" value="Nucleotidyltransferase"/>
    <property type="match status" value="2"/>
</dbReference>
<dbReference type="SUPFAM" id="SSF81593">
    <property type="entry name" value="Nucleotidyltransferase substrate binding subunit/domain"/>
    <property type="match status" value="2"/>
</dbReference>